<organism>
    <name type="scientific">Chelativorans sp. (strain BNC1)</name>
    <dbReference type="NCBI Taxonomy" id="266779"/>
    <lineage>
        <taxon>Bacteria</taxon>
        <taxon>Pseudomonadati</taxon>
        <taxon>Pseudomonadota</taxon>
        <taxon>Alphaproteobacteria</taxon>
        <taxon>Hyphomicrobiales</taxon>
        <taxon>Phyllobacteriaceae</taxon>
        <taxon>Chelativorans</taxon>
    </lineage>
</organism>
<reference key="1">
    <citation type="submission" date="2006-06" db="EMBL/GenBank/DDBJ databases">
        <title>Complete sequence of chromosome of Mesorhizobium sp. BNC1.</title>
        <authorList>
            <consortium name="US DOE Joint Genome Institute"/>
            <person name="Copeland A."/>
            <person name="Lucas S."/>
            <person name="Lapidus A."/>
            <person name="Barry K."/>
            <person name="Detter J.C."/>
            <person name="Glavina del Rio T."/>
            <person name="Hammon N."/>
            <person name="Israni S."/>
            <person name="Dalin E."/>
            <person name="Tice H."/>
            <person name="Pitluck S."/>
            <person name="Chertkov O."/>
            <person name="Brettin T."/>
            <person name="Bruce D."/>
            <person name="Han C."/>
            <person name="Tapia R."/>
            <person name="Gilna P."/>
            <person name="Schmutz J."/>
            <person name="Larimer F."/>
            <person name="Land M."/>
            <person name="Hauser L."/>
            <person name="Kyrpides N."/>
            <person name="Mikhailova N."/>
            <person name="Richardson P."/>
        </authorList>
    </citation>
    <scope>NUCLEOTIDE SEQUENCE [LARGE SCALE GENOMIC DNA]</scope>
    <source>
        <strain>BNC1</strain>
    </source>
</reference>
<evidence type="ECO:0000255" key="1">
    <source>
        <dbReference type="HAMAP-Rule" id="MF_01393"/>
    </source>
</evidence>
<name>ATP6_CHESB</name>
<proteinExistence type="inferred from homology"/>
<protein>
    <recommendedName>
        <fullName evidence="1">ATP synthase subunit a</fullName>
    </recommendedName>
    <alternativeName>
        <fullName evidence="1">ATP synthase F0 sector subunit a</fullName>
    </alternativeName>
    <alternativeName>
        <fullName evidence="1">F-ATPase subunit 6</fullName>
    </alternativeName>
</protein>
<gene>
    <name evidence="1" type="primary">atpB</name>
    <name type="ordered locus">Meso_0696</name>
</gene>
<sequence length="249" mass="26756">MATDPIHQFQISKLIPIEIGGLDFSFTNSSLFMVATVAAAGAFLYLTTSSRGLVPSRMQSVSEMSYEFVASMLRDAAGSHGMRFFPFVFSLFMFVLVANLLGLFPYFFTVTSHIVVTFALALLVIGTVLVYGFWKHGFGFLKLFVPEGVPGVLLPLVVLIEVISFLSRPISLSVRLFANMLAGHITLKVFAGFVTSLGALGVAGAAGAVLPLAMTVALTGLELLVAFLQAYVFAVLTCMYLNDALHPGH</sequence>
<feature type="chain" id="PRO_0000362345" description="ATP synthase subunit a">
    <location>
        <begin position="1"/>
        <end position="249"/>
    </location>
</feature>
<feature type="transmembrane region" description="Helical" evidence="1">
    <location>
        <begin position="26"/>
        <end position="46"/>
    </location>
</feature>
<feature type="transmembrane region" description="Helical" evidence="1">
    <location>
        <begin position="84"/>
        <end position="104"/>
    </location>
</feature>
<feature type="transmembrane region" description="Helical" evidence="1">
    <location>
        <begin position="114"/>
        <end position="134"/>
    </location>
</feature>
<feature type="transmembrane region" description="Helical" evidence="1">
    <location>
        <begin position="143"/>
        <end position="163"/>
    </location>
</feature>
<feature type="transmembrane region" description="Helical" evidence="1">
    <location>
        <begin position="185"/>
        <end position="205"/>
    </location>
</feature>
<feature type="transmembrane region" description="Helical" evidence="1">
    <location>
        <begin position="208"/>
        <end position="228"/>
    </location>
</feature>
<keyword id="KW-0066">ATP synthesis</keyword>
<keyword id="KW-0997">Cell inner membrane</keyword>
<keyword id="KW-1003">Cell membrane</keyword>
<keyword id="KW-0138">CF(0)</keyword>
<keyword id="KW-0375">Hydrogen ion transport</keyword>
<keyword id="KW-0406">Ion transport</keyword>
<keyword id="KW-0472">Membrane</keyword>
<keyword id="KW-0812">Transmembrane</keyword>
<keyword id="KW-1133">Transmembrane helix</keyword>
<keyword id="KW-0813">Transport</keyword>
<dbReference type="EMBL" id="CP000390">
    <property type="protein sequence ID" value="ABG62096.1"/>
    <property type="molecule type" value="Genomic_DNA"/>
</dbReference>
<dbReference type="SMR" id="Q11KH9"/>
<dbReference type="STRING" id="266779.Meso_0696"/>
<dbReference type="KEGG" id="mes:Meso_0696"/>
<dbReference type="eggNOG" id="COG0356">
    <property type="taxonomic scope" value="Bacteria"/>
</dbReference>
<dbReference type="HOGENOM" id="CLU_041018_0_2_5"/>
<dbReference type="OrthoDB" id="9809130at2"/>
<dbReference type="GO" id="GO:0005886">
    <property type="term" value="C:plasma membrane"/>
    <property type="evidence" value="ECO:0007669"/>
    <property type="project" value="UniProtKB-SubCell"/>
</dbReference>
<dbReference type="GO" id="GO:0045259">
    <property type="term" value="C:proton-transporting ATP synthase complex"/>
    <property type="evidence" value="ECO:0007669"/>
    <property type="project" value="UniProtKB-KW"/>
</dbReference>
<dbReference type="GO" id="GO:0046933">
    <property type="term" value="F:proton-transporting ATP synthase activity, rotational mechanism"/>
    <property type="evidence" value="ECO:0007669"/>
    <property type="project" value="UniProtKB-UniRule"/>
</dbReference>
<dbReference type="CDD" id="cd00310">
    <property type="entry name" value="ATP-synt_Fo_a_6"/>
    <property type="match status" value="1"/>
</dbReference>
<dbReference type="FunFam" id="1.20.120.220:FF:000003">
    <property type="entry name" value="ATP synthase subunit a"/>
    <property type="match status" value="1"/>
</dbReference>
<dbReference type="Gene3D" id="1.20.120.220">
    <property type="entry name" value="ATP synthase, F0 complex, subunit A"/>
    <property type="match status" value="1"/>
</dbReference>
<dbReference type="HAMAP" id="MF_01393">
    <property type="entry name" value="ATP_synth_a_bact"/>
    <property type="match status" value="1"/>
</dbReference>
<dbReference type="InterPro" id="IPR000568">
    <property type="entry name" value="ATP_synth_F0_asu"/>
</dbReference>
<dbReference type="InterPro" id="IPR023011">
    <property type="entry name" value="ATP_synth_F0_asu_AS"/>
</dbReference>
<dbReference type="InterPro" id="IPR045083">
    <property type="entry name" value="ATP_synth_F0_asu_bact/mt"/>
</dbReference>
<dbReference type="InterPro" id="IPR035908">
    <property type="entry name" value="F0_ATP_A_sf"/>
</dbReference>
<dbReference type="NCBIfam" id="TIGR01131">
    <property type="entry name" value="ATP_synt_6_or_A"/>
    <property type="match status" value="1"/>
</dbReference>
<dbReference type="NCBIfam" id="NF004482">
    <property type="entry name" value="PRK05815.2-4"/>
    <property type="match status" value="1"/>
</dbReference>
<dbReference type="PANTHER" id="PTHR11410">
    <property type="entry name" value="ATP SYNTHASE SUBUNIT A"/>
    <property type="match status" value="1"/>
</dbReference>
<dbReference type="PANTHER" id="PTHR11410:SF0">
    <property type="entry name" value="ATP SYNTHASE SUBUNIT A"/>
    <property type="match status" value="1"/>
</dbReference>
<dbReference type="Pfam" id="PF00119">
    <property type="entry name" value="ATP-synt_A"/>
    <property type="match status" value="1"/>
</dbReference>
<dbReference type="PRINTS" id="PR00123">
    <property type="entry name" value="ATPASEA"/>
</dbReference>
<dbReference type="SUPFAM" id="SSF81336">
    <property type="entry name" value="F1F0 ATP synthase subunit A"/>
    <property type="match status" value="1"/>
</dbReference>
<dbReference type="PROSITE" id="PS00449">
    <property type="entry name" value="ATPASE_A"/>
    <property type="match status" value="1"/>
</dbReference>
<comment type="function">
    <text evidence="1">Key component of the proton channel; it plays a direct role in the translocation of protons across the membrane.</text>
</comment>
<comment type="subunit">
    <text evidence="1">F-type ATPases have 2 components, CF(1) - the catalytic core - and CF(0) - the membrane proton channel. CF(1) has five subunits: alpha(3), beta(3), gamma(1), delta(1), epsilon(1). CF(0) has three main subunits: a(1), b(2) and c(9-12). The alpha and beta chains form an alternating ring which encloses part of the gamma chain. CF(1) is attached to CF(0) by a central stalk formed by the gamma and epsilon chains, while a peripheral stalk is formed by the delta and b chains.</text>
</comment>
<comment type="subcellular location">
    <subcellularLocation>
        <location evidence="1">Cell inner membrane</location>
        <topology evidence="1">Multi-pass membrane protein</topology>
    </subcellularLocation>
</comment>
<comment type="similarity">
    <text evidence="1">Belongs to the ATPase A chain family.</text>
</comment>
<accession>Q11KH9</accession>